<evidence type="ECO:0000255" key="1">
    <source>
        <dbReference type="HAMAP-Rule" id="MF_00004"/>
    </source>
</evidence>
<gene>
    <name evidence="1" type="primary">apt</name>
    <name type="ordered locus">BQ2027_MB2615C</name>
</gene>
<dbReference type="EC" id="2.4.2.7" evidence="1"/>
<dbReference type="EMBL" id="LT708304">
    <property type="protein sequence ID" value="SIU01233.1"/>
    <property type="molecule type" value="Genomic_DNA"/>
</dbReference>
<dbReference type="RefSeq" id="NP_856261.1">
    <property type="nucleotide sequence ID" value="NC_002945.3"/>
</dbReference>
<dbReference type="RefSeq" id="WP_003413369.1">
    <property type="nucleotide sequence ID" value="NC_002945.4"/>
</dbReference>
<dbReference type="SMR" id="P59959"/>
<dbReference type="KEGG" id="mbo:BQ2027_MB2615C"/>
<dbReference type="PATRIC" id="fig|233413.5.peg.2876"/>
<dbReference type="UniPathway" id="UPA00588">
    <property type="reaction ID" value="UER00646"/>
</dbReference>
<dbReference type="Proteomes" id="UP000001419">
    <property type="component" value="Chromosome"/>
</dbReference>
<dbReference type="GO" id="GO:0005737">
    <property type="term" value="C:cytoplasm"/>
    <property type="evidence" value="ECO:0007669"/>
    <property type="project" value="UniProtKB-SubCell"/>
</dbReference>
<dbReference type="GO" id="GO:0002055">
    <property type="term" value="F:adenine binding"/>
    <property type="evidence" value="ECO:0007669"/>
    <property type="project" value="TreeGrafter"/>
</dbReference>
<dbReference type="GO" id="GO:0003999">
    <property type="term" value="F:adenine phosphoribosyltransferase activity"/>
    <property type="evidence" value="ECO:0007669"/>
    <property type="project" value="UniProtKB-UniRule"/>
</dbReference>
<dbReference type="GO" id="GO:0016208">
    <property type="term" value="F:AMP binding"/>
    <property type="evidence" value="ECO:0007669"/>
    <property type="project" value="TreeGrafter"/>
</dbReference>
<dbReference type="GO" id="GO:0006168">
    <property type="term" value="P:adenine salvage"/>
    <property type="evidence" value="ECO:0007669"/>
    <property type="project" value="InterPro"/>
</dbReference>
<dbReference type="GO" id="GO:0044209">
    <property type="term" value="P:AMP salvage"/>
    <property type="evidence" value="ECO:0007669"/>
    <property type="project" value="UniProtKB-UniRule"/>
</dbReference>
<dbReference type="GO" id="GO:0006166">
    <property type="term" value="P:purine ribonucleoside salvage"/>
    <property type="evidence" value="ECO:0007669"/>
    <property type="project" value="UniProtKB-KW"/>
</dbReference>
<dbReference type="CDD" id="cd06223">
    <property type="entry name" value="PRTases_typeI"/>
    <property type="match status" value="1"/>
</dbReference>
<dbReference type="FunFam" id="3.40.50.2020:FF:000021">
    <property type="entry name" value="Adenine phosphoribosyltransferase"/>
    <property type="match status" value="1"/>
</dbReference>
<dbReference type="Gene3D" id="3.40.50.2020">
    <property type="match status" value="1"/>
</dbReference>
<dbReference type="HAMAP" id="MF_00004">
    <property type="entry name" value="Aden_phosphoribosyltr"/>
    <property type="match status" value="1"/>
</dbReference>
<dbReference type="InterPro" id="IPR005764">
    <property type="entry name" value="Ade_phspho_trans"/>
</dbReference>
<dbReference type="InterPro" id="IPR000836">
    <property type="entry name" value="PRibTrfase_dom"/>
</dbReference>
<dbReference type="InterPro" id="IPR029057">
    <property type="entry name" value="PRTase-like"/>
</dbReference>
<dbReference type="InterPro" id="IPR050054">
    <property type="entry name" value="UPRTase/APRTase"/>
</dbReference>
<dbReference type="NCBIfam" id="NF002636">
    <property type="entry name" value="PRK02304.1-5"/>
    <property type="match status" value="1"/>
</dbReference>
<dbReference type="PANTHER" id="PTHR32315">
    <property type="entry name" value="ADENINE PHOSPHORIBOSYLTRANSFERASE"/>
    <property type="match status" value="1"/>
</dbReference>
<dbReference type="PANTHER" id="PTHR32315:SF3">
    <property type="entry name" value="ADENINE PHOSPHORIBOSYLTRANSFERASE"/>
    <property type="match status" value="1"/>
</dbReference>
<dbReference type="Pfam" id="PF00156">
    <property type="entry name" value="Pribosyltran"/>
    <property type="match status" value="1"/>
</dbReference>
<dbReference type="SUPFAM" id="SSF53271">
    <property type="entry name" value="PRTase-like"/>
    <property type="match status" value="1"/>
</dbReference>
<dbReference type="PROSITE" id="PS00103">
    <property type="entry name" value="PUR_PYR_PR_TRANSFER"/>
    <property type="match status" value="1"/>
</dbReference>
<proteinExistence type="inferred from homology"/>
<reference key="1">
    <citation type="journal article" date="2003" name="Proc. Natl. Acad. Sci. U.S.A.">
        <title>The complete genome sequence of Mycobacterium bovis.</title>
        <authorList>
            <person name="Garnier T."/>
            <person name="Eiglmeier K."/>
            <person name="Camus J.-C."/>
            <person name="Medina N."/>
            <person name="Mansoor H."/>
            <person name="Pryor M."/>
            <person name="Duthoy S."/>
            <person name="Grondin S."/>
            <person name="Lacroix C."/>
            <person name="Monsempe C."/>
            <person name="Simon S."/>
            <person name="Harris B."/>
            <person name="Atkin R."/>
            <person name="Doggett J."/>
            <person name="Mayes R."/>
            <person name="Keating L."/>
            <person name="Wheeler P.R."/>
            <person name="Parkhill J."/>
            <person name="Barrell B.G."/>
            <person name="Cole S.T."/>
            <person name="Gordon S.V."/>
            <person name="Hewinson R.G."/>
        </authorList>
    </citation>
    <scope>NUCLEOTIDE SEQUENCE [LARGE SCALE GENOMIC DNA]</scope>
    <source>
        <strain>ATCC BAA-935 / AF2122/97</strain>
    </source>
</reference>
<reference key="2">
    <citation type="journal article" date="2017" name="Genome Announc.">
        <title>Updated reference genome sequence and annotation of Mycobacterium bovis AF2122/97.</title>
        <authorList>
            <person name="Malone K.M."/>
            <person name="Farrell D."/>
            <person name="Stuber T.P."/>
            <person name="Schubert O.T."/>
            <person name="Aebersold R."/>
            <person name="Robbe-Austerman S."/>
            <person name="Gordon S.V."/>
        </authorList>
    </citation>
    <scope>NUCLEOTIDE SEQUENCE [LARGE SCALE GENOMIC DNA]</scope>
    <scope>GENOME REANNOTATION</scope>
    <source>
        <strain>ATCC BAA-935 / AF2122/97</strain>
    </source>
</reference>
<comment type="function">
    <text evidence="1">Catalyzes a salvage reaction resulting in the formation of AMP, that is energically less costly than de novo synthesis.</text>
</comment>
<comment type="catalytic activity">
    <reaction evidence="1">
        <text>AMP + diphosphate = 5-phospho-alpha-D-ribose 1-diphosphate + adenine</text>
        <dbReference type="Rhea" id="RHEA:16609"/>
        <dbReference type="ChEBI" id="CHEBI:16708"/>
        <dbReference type="ChEBI" id="CHEBI:33019"/>
        <dbReference type="ChEBI" id="CHEBI:58017"/>
        <dbReference type="ChEBI" id="CHEBI:456215"/>
        <dbReference type="EC" id="2.4.2.7"/>
    </reaction>
</comment>
<comment type="pathway">
    <text evidence="1">Purine metabolism; AMP biosynthesis via salvage pathway; AMP from adenine: step 1/1.</text>
</comment>
<comment type="subunit">
    <text evidence="1">Homodimer.</text>
</comment>
<comment type="subcellular location">
    <subcellularLocation>
        <location evidence="1">Cytoplasm</location>
    </subcellularLocation>
</comment>
<comment type="similarity">
    <text evidence="1">Belongs to the purine/pyrimidine phosphoribosyltransferase family.</text>
</comment>
<organism>
    <name type="scientific">Mycobacterium bovis (strain ATCC BAA-935 / AF2122/97)</name>
    <dbReference type="NCBI Taxonomy" id="233413"/>
    <lineage>
        <taxon>Bacteria</taxon>
        <taxon>Bacillati</taxon>
        <taxon>Actinomycetota</taxon>
        <taxon>Actinomycetes</taxon>
        <taxon>Mycobacteriales</taxon>
        <taxon>Mycobacteriaceae</taxon>
        <taxon>Mycobacterium</taxon>
        <taxon>Mycobacterium tuberculosis complex</taxon>
    </lineage>
</organism>
<name>APT_MYCBO</name>
<sequence>MCHGGTWAGDYVLNVIATGLSLKARGKRRRQRWVDDGRVLALGESRRSSAISVADVVASLTRDVADFPVPGVEFKDLTPLFADRRGLAAVTEALADRASGADLVAGVDARGFLVAAAVATRLEVGVLAVRKGGKLPRPVLSEEYYREYGAATLEILAEGIEVAGRRVVIIDDVLATGGTIGATRRLLERGGANVAGAAVVVELAGLSGRAALAPLPVHSLSRL</sequence>
<keyword id="KW-0963">Cytoplasm</keyword>
<keyword id="KW-0328">Glycosyltransferase</keyword>
<keyword id="KW-0660">Purine salvage</keyword>
<keyword id="KW-1185">Reference proteome</keyword>
<keyword id="KW-0808">Transferase</keyword>
<protein>
    <recommendedName>
        <fullName evidence="1">Adenine phosphoribosyltransferase</fullName>
        <shortName evidence="1">APRT</shortName>
        <ecNumber evidence="1">2.4.2.7</ecNumber>
    </recommendedName>
</protein>
<accession>P59959</accession>
<accession>A0A1R3Y1M3</accession>
<accession>X2BL45</accession>
<feature type="chain" id="PRO_0000149419" description="Adenine phosphoribosyltransferase">
    <location>
        <begin position="1"/>
        <end position="223"/>
    </location>
</feature>